<comment type="function">
    <text evidence="1">Catalyzes the conversion of GTP to 2,5-diamino-6-ribosylamino-4(3H)-pyrimidinone 5'-phosphate (DARP), formate and pyrophosphate.</text>
</comment>
<comment type="catalytic activity">
    <reaction evidence="1">
        <text>GTP + 4 H2O = 2,5-diamino-6-hydroxy-4-(5-phosphoribosylamino)-pyrimidine + formate + 2 phosphate + 3 H(+)</text>
        <dbReference type="Rhea" id="RHEA:23704"/>
        <dbReference type="ChEBI" id="CHEBI:15377"/>
        <dbReference type="ChEBI" id="CHEBI:15378"/>
        <dbReference type="ChEBI" id="CHEBI:15740"/>
        <dbReference type="ChEBI" id="CHEBI:37565"/>
        <dbReference type="ChEBI" id="CHEBI:43474"/>
        <dbReference type="ChEBI" id="CHEBI:58614"/>
        <dbReference type="EC" id="3.5.4.25"/>
    </reaction>
</comment>
<comment type="cofactor">
    <cofactor evidence="1">
        <name>Zn(2+)</name>
        <dbReference type="ChEBI" id="CHEBI:29105"/>
    </cofactor>
    <text evidence="1">Binds 1 zinc ion per subunit.</text>
</comment>
<comment type="pathway">
    <text evidence="1">Cofactor biosynthesis; riboflavin biosynthesis; 5-amino-6-(D-ribitylamino)uracil from GTP: step 1/4.</text>
</comment>
<comment type="similarity">
    <text evidence="1">Belongs to the GTP cyclohydrolase II family.</text>
</comment>
<gene>
    <name evidence="1" type="primary">ribA</name>
    <name type="ordered locus">CFF8240_1575</name>
</gene>
<organism>
    <name type="scientific">Campylobacter fetus subsp. fetus (strain 82-40)</name>
    <dbReference type="NCBI Taxonomy" id="360106"/>
    <lineage>
        <taxon>Bacteria</taxon>
        <taxon>Pseudomonadati</taxon>
        <taxon>Campylobacterota</taxon>
        <taxon>Epsilonproteobacteria</taxon>
        <taxon>Campylobacterales</taxon>
        <taxon>Campylobacteraceae</taxon>
        <taxon>Campylobacter</taxon>
    </lineage>
</organism>
<proteinExistence type="inferred from homology"/>
<name>RIBA_CAMFF</name>
<evidence type="ECO:0000255" key="1">
    <source>
        <dbReference type="HAMAP-Rule" id="MF_00179"/>
    </source>
</evidence>
<keyword id="KW-0342">GTP-binding</keyword>
<keyword id="KW-0378">Hydrolase</keyword>
<keyword id="KW-0479">Metal-binding</keyword>
<keyword id="KW-0547">Nucleotide-binding</keyword>
<keyword id="KW-0686">Riboflavin biosynthesis</keyword>
<keyword id="KW-0862">Zinc</keyword>
<accession>A0RR75</accession>
<protein>
    <recommendedName>
        <fullName evidence="1">GTP cyclohydrolase-2</fullName>
        <ecNumber evidence="1">3.5.4.25</ecNumber>
    </recommendedName>
    <alternativeName>
        <fullName evidence="1">GTP cyclohydrolase II</fullName>
    </alternativeName>
</protein>
<reference key="1">
    <citation type="submission" date="2006-11" db="EMBL/GenBank/DDBJ databases">
        <title>Sequence of Campylobacter fetus subsp. fetus 82-40.</title>
        <authorList>
            <person name="Fouts D.E."/>
            <person name="Nelson K.E."/>
        </authorList>
    </citation>
    <scope>NUCLEOTIDE SEQUENCE [LARGE SCALE GENOMIC DNA]</scope>
    <source>
        <strain>82-40</strain>
    </source>
</reference>
<sequence length="195" mass="22228">MEIIKSNIANLPSRFGKFQIKSYKEGCCKEHLTIFSPNLDVTKTVNVRIHSECLTGDAIGSLKCDCRDQLEASLKYINKHGGMVIYLRQEGRNIGLLNKVNAYALQDNGLDTIEANHQLGFKADERTYEIVDFILKDFGIKSINLLTNNPLKLASLTCVNIEKRIPIEIESNEFNKDYLKVKKEQMGHMLDEFTR</sequence>
<dbReference type="EC" id="3.5.4.25" evidence="1"/>
<dbReference type="EMBL" id="CP000487">
    <property type="protein sequence ID" value="ABK81791.1"/>
    <property type="molecule type" value="Genomic_DNA"/>
</dbReference>
<dbReference type="RefSeq" id="WP_002850616.1">
    <property type="nucleotide sequence ID" value="NC_008599.1"/>
</dbReference>
<dbReference type="SMR" id="A0RR75"/>
<dbReference type="GeneID" id="61065392"/>
<dbReference type="KEGG" id="cff:CFF8240_1575"/>
<dbReference type="eggNOG" id="COG0807">
    <property type="taxonomic scope" value="Bacteria"/>
</dbReference>
<dbReference type="HOGENOM" id="CLU_020273_2_1_7"/>
<dbReference type="UniPathway" id="UPA00275">
    <property type="reaction ID" value="UER00400"/>
</dbReference>
<dbReference type="Proteomes" id="UP000000760">
    <property type="component" value="Chromosome"/>
</dbReference>
<dbReference type="GO" id="GO:0005829">
    <property type="term" value="C:cytosol"/>
    <property type="evidence" value="ECO:0007669"/>
    <property type="project" value="TreeGrafter"/>
</dbReference>
<dbReference type="GO" id="GO:0005525">
    <property type="term" value="F:GTP binding"/>
    <property type="evidence" value="ECO:0007669"/>
    <property type="project" value="UniProtKB-KW"/>
</dbReference>
<dbReference type="GO" id="GO:0003935">
    <property type="term" value="F:GTP cyclohydrolase II activity"/>
    <property type="evidence" value="ECO:0007669"/>
    <property type="project" value="UniProtKB-UniRule"/>
</dbReference>
<dbReference type="GO" id="GO:0008270">
    <property type="term" value="F:zinc ion binding"/>
    <property type="evidence" value="ECO:0007669"/>
    <property type="project" value="UniProtKB-UniRule"/>
</dbReference>
<dbReference type="GO" id="GO:0009231">
    <property type="term" value="P:riboflavin biosynthetic process"/>
    <property type="evidence" value="ECO:0007669"/>
    <property type="project" value="UniProtKB-UniRule"/>
</dbReference>
<dbReference type="CDD" id="cd00641">
    <property type="entry name" value="GTP_cyclohydro2"/>
    <property type="match status" value="1"/>
</dbReference>
<dbReference type="FunFam" id="3.40.50.10990:FF:000002">
    <property type="entry name" value="GTP cyclohydrolase-2"/>
    <property type="match status" value="1"/>
</dbReference>
<dbReference type="Gene3D" id="3.40.50.10990">
    <property type="entry name" value="GTP cyclohydrolase II"/>
    <property type="match status" value="1"/>
</dbReference>
<dbReference type="HAMAP" id="MF_00179">
    <property type="entry name" value="RibA"/>
    <property type="match status" value="1"/>
</dbReference>
<dbReference type="InterPro" id="IPR032677">
    <property type="entry name" value="GTP_cyclohydro_II"/>
</dbReference>
<dbReference type="InterPro" id="IPR000926">
    <property type="entry name" value="RibA"/>
</dbReference>
<dbReference type="InterPro" id="IPR036144">
    <property type="entry name" value="RibA-like_sf"/>
</dbReference>
<dbReference type="NCBIfam" id="NF001591">
    <property type="entry name" value="PRK00393.1"/>
    <property type="match status" value="1"/>
</dbReference>
<dbReference type="NCBIfam" id="TIGR00505">
    <property type="entry name" value="ribA"/>
    <property type="match status" value="1"/>
</dbReference>
<dbReference type="PANTHER" id="PTHR21327:SF18">
    <property type="entry name" value="3,4-DIHYDROXY-2-BUTANONE 4-PHOSPHATE SYNTHASE"/>
    <property type="match status" value="1"/>
</dbReference>
<dbReference type="PANTHER" id="PTHR21327">
    <property type="entry name" value="GTP CYCLOHYDROLASE II-RELATED"/>
    <property type="match status" value="1"/>
</dbReference>
<dbReference type="Pfam" id="PF00925">
    <property type="entry name" value="GTP_cyclohydro2"/>
    <property type="match status" value="1"/>
</dbReference>
<dbReference type="SUPFAM" id="SSF142695">
    <property type="entry name" value="RibA-like"/>
    <property type="match status" value="1"/>
</dbReference>
<feature type="chain" id="PRO_1000040557" description="GTP cyclohydrolase-2">
    <location>
        <begin position="1"/>
        <end position="195"/>
    </location>
</feature>
<feature type="active site" description="Proton acceptor" evidence="1">
    <location>
        <position position="124"/>
    </location>
</feature>
<feature type="active site" description="Nucleophile" evidence="1">
    <location>
        <position position="126"/>
    </location>
</feature>
<feature type="binding site" evidence="1">
    <location>
        <begin position="48"/>
        <end position="52"/>
    </location>
    <ligand>
        <name>GTP</name>
        <dbReference type="ChEBI" id="CHEBI:37565"/>
    </ligand>
</feature>
<feature type="binding site" evidence="1">
    <location>
        <position position="53"/>
    </location>
    <ligand>
        <name>Zn(2+)</name>
        <dbReference type="ChEBI" id="CHEBI:29105"/>
        <note>catalytic</note>
    </ligand>
</feature>
<feature type="binding site" evidence="1">
    <location>
        <position position="64"/>
    </location>
    <ligand>
        <name>Zn(2+)</name>
        <dbReference type="ChEBI" id="CHEBI:29105"/>
        <note>catalytic</note>
    </ligand>
</feature>
<feature type="binding site" evidence="1">
    <location>
        <position position="66"/>
    </location>
    <ligand>
        <name>Zn(2+)</name>
        <dbReference type="ChEBI" id="CHEBI:29105"/>
        <note>catalytic</note>
    </ligand>
</feature>
<feature type="binding site" evidence="1">
    <location>
        <position position="69"/>
    </location>
    <ligand>
        <name>GTP</name>
        <dbReference type="ChEBI" id="CHEBI:37565"/>
    </ligand>
</feature>
<feature type="binding site" evidence="1">
    <location>
        <begin position="90"/>
        <end position="92"/>
    </location>
    <ligand>
        <name>GTP</name>
        <dbReference type="ChEBI" id="CHEBI:37565"/>
    </ligand>
</feature>
<feature type="binding site" evidence="1">
    <location>
        <position position="112"/>
    </location>
    <ligand>
        <name>GTP</name>
        <dbReference type="ChEBI" id="CHEBI:37565"/>
    </ligand>
</feature>
<feature type="binding site" evidence="1">
    <location>
        <position position="147"/>
    </location>
    <ligand>
        <name>GTP</name>
        <dbReference type="ChEBI" id="CHEBI:37565"/>
    </ligand>
</feature>
<feature type="binding site" evidence="1">
    <location>
        <position position="152"/>
    </location>
    <ligand>
        <name>GTP</name>
        <dbReference type="ChEBI" id="CHEBI:37565"/>
    </ligand>
</feature>